<gene>
    <name evidence="2" type="primary">infB</name>
    <name type="ordered locus">Sala_0612</name>
</gene>
<proteinExistence type="inferred from homology"/>
<comment type="function">
    <text evidence="2">One of the essential components for the initiation of protein synthesis. Protects formylmethionyl-tRNA from spontaneous hydrolysis and promotes its binding to the 30S ribosomal subunits. Also involved in the hydrolysis of GTP during the formation of the 70S ribosomal complex.</text>
</comment>
<comment type="subcellular location">
    <subcellularLocation>
        <location evidence="2">Cytoplasm</location>
    </subcellularLocation>
</comment>
<comment type="similarity">
    <text evidence="2">Belongs to the TRAFAC class translation factor GTPase superfamily. Classic translation factor GTPase family. IF-2 subfamily.</text>
</comment>
<dbReference type="EMBL" id="CP000356">
    <property type="protein sequence ID" value="ABF52333.1"/>
    <property type="molecule type" value="Genomic_DNA"/>
</dbReference>
<dbReference type="RefSeq" id="WP_011540923.1">
    <property type="nucleotide sequence ID" value="NC_008048.1"/>
</dbReference>
<dbReference type="SMR" id="Q1GVI9"/>
<dbReference type="STRING" id="317655.Sala_0612"/>
<dbReference type="KEGG" id="sal:Sala_0612"/>
<dbReference type="eggNOG" id="COG0532">
    <property type="taxonomic scope" value="Bacteria"/>
</dbReference>
<dbReference type="HOGENOM" id="CLU_006301_10_1_5"/>
<dbReference type="OrthoDB" id="9811804at2"/>
<dbReference type="Proteomes" id="UP000006578">
    <property type="component" value="Chromosome"/>
</dbReference>
<dbReference type="GO" id="GO:0005829">
    <property type="term" value="C:cytosol"/>
    <property type="evidence" value="ECO:0007669"/>
    <property type="project" value="TreeGrafter"/>
</dbReference>
<dbReference type="GO" id="GO:0005525">
    <property type="term" value="F:GTP binding"/>
    <property type="evidence" value="ECO:0007669"/>
    <property type="project" value="UniProtKB-KW"/>
</dbReference>
<dbReference type="GO" id="GO:0003924">
    <property type="term" value="F:GTPase activity"/>
    <property type="evidence" value="ECO:0007669"/>
    <property type="project" value="UniProtKB-UniRule"/>
</dbReference>
<dbReference type="GO" id="GO:0003743">
    <property type="term" value="F:translation initiation factor activity"/>
    <property type="evidence" value="ECO:0007669"/>
    <property type="project" value="UniProtKB-UniRule"/>
</dbReference>
<dbReference type="CDD" id="cd01887">
    <property type="entry name" value="IF2_eIF5B"/>
    <property type="match status" value="1"/>
</dbReference>
<dbReference type="CDD" id="cd03702">
    <property type="entry name" value="IF2_mtIF2_II"/>
    <property type="match status" value="1"/>
</dbReference>
<dbReference type="CDD" id="cd03692">
    <property type="entry name" value="mtIF2_IVc"/>
    <property type="match status" value="1"/>
</dbReference>
<dbReference type="FunFam" id="2.40.30.10:FF:000007">
    <property type="entry name" value="Translation initiation factor IF-2"/>
    <property type="match status" value="1"/>
</dbReference>
<dbReference type="FunFam" id="2.40.30.10:FF:000008">
    <property type="entry name" value="Translation initiation factor IF-2"/>
    <property type="match status" value="1"/>
</dbReference>
<dbReference type="FunFam" id="3.40.50.10050:FF:000001">
    <property type="entry name" value="Translation initiation factor IF-2"/>
    <property type="match status" value="1"/>
</dbReference>
<dbReference type="FunFam" id="3.40.50.300:FF:000019">
    <property type="entry name" value="Translation initiation factor IF-2"/>
    <property type="match status" value="1"/>
</dbReference>
<dbReference type="Gene3D" id="3.40.50.300">
    <property type="entry name" value="P-loop containing nucleotide triphosphate hydrolases"/>
    <property type="match status" value="1"/>
</dbReference>
<dbReference type="Gene3D" id="2.40.30.10">
    <property type="entry name" value="Translation factors"/>
    <property type="match status" value="2"/>
</dbReference>
<dbReference type="Gene3D" id="3.40.50.10050">
    <property type="entry name" value="Translation initiation factor IF- 2, domain 3"/>
    <property type="match status" value="1"/>
</dbReference>
<dbReference type="HAMAP" id="MF_00100_B">
    <property type="entry name" value="IF_2_B"/>
    <property type="match status" value="1"/>
</dbReference>
<dbReference type="InterPro" id="IPR053905">
    <property type="entry name" value="EF-G-like_DII"/>
</dbReference>
<dbReference type="InterPro" id="IPR013575">
    <property type="entry name" value="IF2_assoc_dom_bac"/>
</dbReference>
<dbReference type="InterPro" id="IPR044145">
    <property type="entry name" value="IF2_II"/>
</dbReference>
<dbReference type="InterPro" id="IPR006847">
    <property type="entry name" value="IF2_N"/>
</dbReference>
<dbReference type="InterPro" id="IPR027417">
    <property type="entry name" value="P-loop_NTPase"/>
</dbReference>
<dbReference type="InterPro" id="IPR005225">
    <property type="entry name" value="Small_GTP-bd"/>
</dbReference>
<dbReference type="InterPro" id="IPR000795">
    <property type="entry name" value="T_Tr_GTP-bd_dom"/>
</dbReference>
<dbReference type="InterPro" id="IPR000178">
    <property type="entry name" value="TF_IF2_bacterial-like"/>
</dbReference>
<dbReference type="InterPro" id="IPR015760">
    <property type="entry name" value="TIF_IF2"/>
</dbReference>
<dbReference type="InterPro" id="IPR023115">
    <property type="entry name" value="TIF_IF2_dom3"/>
</dbReference>
<dbReference type="InterPro" id="IPR036925">
    <property type="entry name" value="TIF_IF2_dom3_sf"/>
</dbReference>
<dbReference type="InterPro" id="IPR009000">
    <property type="entry name" value="Transl_B-barrel_sf"/>
</dbReference>
<dbReference type="NCBIfam" id="TIGR00487">
    <property type="entry name" value="IF-2"/>
    <property type="match status" value="1"/>
</dbReference>
<dbReference type="NCBIfam" id="TIGR00231">
    <property type="entry name" value="small_GTP"/>
    <property type="match status" value="1"/>
</dbReference>
<dbReference type="PANTHER" id="PTHR43381:SF5">
    <property type="entry name" value="TR-TYPE G DOMAIN-CONTAINING PROTEIN"/>
    <property type="match status" value="1"/>
</dbReference>
<dbReference type="PANTHER" id="PTHR43381">
    <property type="entry name" value="TRANSLATION INITIATION FACTOR IF-2-RELATED"/>
    <property type="match status" value="1"/>
</dbReference>
<dbReference type="Pfam" id="PF22042">
    <property type="entry name" value="EF-G_D2"/>
    <property type="match status" value="1"/>
</dbReference>
<dbReference type="Pfam" id="PF00009">
    <property type="entry name" value="GTP_EFTU"/>
    <property type="match status" value="1"/>
</dbReference>
<dbReference type="Pfam" id="PF11987">
    <property type="entry name" value="IF-2"/>
    <property type="match status" value="1"/>
</dbReference>
<dbReference type="Pfam" id="PF08364">
    <property type="entry name" value="IF2_assoc"/>
    <property type="match status" value="1"/>
</dbReference>
<dbReference type="Pfam" id="PF04760">
    <property type="entry name" value="IF2_N"/>
    <property type="match status" value="1"/>
</dbReference>
<dbReference type="SUPFAM" id="SSF52156">
    <property type="entry name" value="Initiation factor IF2/eIF5b, domain 3"/>
    <property type="match status" value="1"/>
</dbReference>
<dbReference type="SUPFAM" id="SSF52540">
    <property type="entry name" value="P-loop containing nucleoside triphosphate hydrolases"/>
    <property type="match status" value="1"/>
</dbReference>
<dbReference type="SUPFAM" id="SSF50447">
    <property type="entry name" value="Translation proteins"/>
    <property type="match status" value="2"/>
</dbReference>
<dbReference type="PROSITE" id="PS51722">
    <property type="entry name" value="G_TR_2"/>
    <property type="match status" value="1"/>
</dbReference>
<keyword id="KW-0963">Cytoplasm</keyword>
<keyword id="KW-0342">GTP-binding</keyword>
<keyword id="KW-0396">Initiation factor</keyword>
<keyword id="KW-0547">Nucleotide-binding</keyword>
<keyword id="KW-0648">Protein biosynthesis</keyword>
<keyword id="KW-1185">Reference proteome</keyword>
<protein>
    <recommendedName>
        <fullName evidence="2">Translation initiation factor IF-2</fullName>
    </recommendedName>
</protein>
<accession>Q1GVI9</accession>
<organism>
    <name type="scientific">Sphingopyxis alaskensis (strain DSM 13593 / LMG 18877 / RB2256)</name>
    <name type="common">Sphingomonas alaskensis</name>
    <dbReference type="NCBI Taxonomy" id="317655"/>
    <lineage>
        <taxon>Bacteria</taxon>
        <taxon>Pseudomonadati</taxon>
        <taxon>Pseudomonadota</taxon>
        <taxon>Alphaproteobacteria</taxon>
        <taxon>Sphingomonadales</taxon>
        <taxon>Sphingomonadaceae</taxon>
        <taxon>Sphingopyxis</taxon>
    </lineage>
</organism>
<reference key="1">
    <citation type="journal article" date="2009" name="Proc. Natl. Acad. Sci. U.S.A.">
        <title>The genomic basis of trophic strategy in marine bacteria.</title>
        <authorList>
            <person name="Lauro F.M."/>
            <person name="McDougald D."/>
            <person name="Thomas T."/>
            <person name="Williams T.J."/>
            <person name="Egan S."/>
            <person name="Rice S."/>
            <person name="DeMaere M.Z."/>
            <person name="Ting L."/>
            <person name="Ertan H."/>
            <person name="Johnson J."/>
            <person name="Ferriera S."/>
            <person name="Lapidus A."/>
            <person name="Anderson I."/>
            <person name="Kyrpides N."/>
            <person name="Munk A.C."/>
            <person name="Detter C."/>
            <person name="Han C.S."/>
            <person name="Brown M.V."/>
            <person name="Robb F.T."/>
            <person name="Kjelleberg S."/>
            <person name="Cavicchioli R."/>
        </authorList>
    </citation>
    <scope>NUCLEOTIDE SEQUENCE [LARGE SCALE GENOMIC DNA]</scope>
    <source>
        <strain>DSM 13593 / LMG 18877 / RB2256</strain>
    </source>
</reference>
<feature type="chain" id="PRO_1000008343" description="Translation initiation factor IF-2">
    <location>
        <begin position="1"/>
        <end position="845"/>
    </location>
</feature>
<feature type="domain" description="tr-type G">
    <location>
        <begin position="344"/>
        <end position="514"/>
    </location>
</feature>
<feature type="region of interest" description="Disordered" evidence="3">
    <location>
        <begin position="1"/>
        <end position="260"/>
    </location>
</feature>
<feature type="region of interest" description="G1" evidence="1">
    <location>
        <begin position="353"/>
        <end position="360"/>
    </location>
</feature>
<feature type="region of interest" description="G2" evidence="1">
    <location>
        <begin position="378"/>
        <end position="382"/>
    </location>
</feature>
<feature type="region of interest" description="G3" evidence="1">
    <location>
        <begin position="400"/>
        <end position="403"/>
    </location>
</feature>
<feature type="region of interest" description="G4" evidence="1">
    <location>
        <begin position="454"/>
        <end position="457"/>
    </location>
</feature>
<feature type="region of interest" description="G5" evidence="1">
    <location>
        <begin position="490"/>
        <end position="492"/>
    </location>
</feature>
<feature type="compositionally biased region" description="Pro residues" evidence="3">
    <location>
        <begin position="68"/>
        <end position="81"/>
    </location>
</feature>
<feature type="compositionally biased region" description="Basic and acidic residues" evidence="3">
    <location>
        <begin position="101"/>
        <end position="140"/>
    </location>
</feature>
<feature type="compositionally biased region" description="Low complexity" evidence="3">
    <location>
        <begin position="141"/>
        <end position="166"/>
    </location>
</feature>
<feature type="compositionally biased region" description="Low complexity" evidence="3">
    <location>
        <begin position="173"/>
        <end position="191"/>
    </location>
</feature>
<feature type="compositionally biased region" description="Basic and acidic residues" evidence="3">
    <location>
        <begin position="194"/>
        <end position="215"/>
    </location>
</feature>
<feature type="binding site" evidence="2">
    <location>
        <begin position="353"/>
        <end position="360"/>
    </location>
    <ligand>
        <name>GTP</name>
        <dbReference type="ChEBI" id="CHEBI:37565"/>
    </ligand>
</feature>
<feature type="binding site" evidence="2">
    <location>
        <begin position="400"/>
        <end position="404"/>
    </location>
    <ligand>
        <name>GTP</name>
        <dbReference type="ChEBI" id="CHEBI:37565"/>
    </ligand>
</feature>
<feature type="binding site" evidence="2">
    <location>
        <begin position="454"/>
        <end position="457"/>
    </location>
    <ligand>
        <name>GTP</name>
        <dbReference type="ChEBI" id="CHEBI:37565"/>
    </ligand>
</feature>
<evidence type="ECO:0000250" key="1"/>
<evidence type="ECO:0000255" key="2">
    <source>
        <dbReference type="HAMAP-Rule" id="MF_00100"/>
    </source>
</evidence>
<evidence type="ECO:0000256" key="3">
    <source>
        <dbReference type="SAM" id="MobiDB-lite"/>
    </source>
</evidence>
<name>IF2_SPHAL</name>
<sequence length="845" mass="91056">MSDEQDKPTLSRKPLGLKRTVEAGQVQQQFSHGRRNTVVVEVKRRRVLGRPGEAAPTPEVEEAKAAPAPAPAPAAPRPAAPKPAAVDSLMTRQERQAQLLREAEEARMAALEENRRREEAERARAAEEERARAEKREEQAATKAPEPAPTPAASAPDATAADAPPAAEGPVETAARPATASAAPAPRRFTPVEALKRPEPKRPEPKASRGGENRRQSGKLTVTRALNEDEGARARSLAALKRAREKEKRSHMTSSGPREKQVREVVVPDTITVQELANRMAEKGADLVKALFKMGMPVTVNQTIDQDTAELLVTEFGHEIKRVSEADIDIRHDEDVDDAAQLKPRAPVVTIMGHVDHGKTSLLDALRGANVQAGEAGGITQHIGAYQVKAKDGSVITFLDTPGHEAFTEMRQRGANVTDIVILVVAADDGLKPQSIEAINHAKAAGVPIIVAINKVDKEGANPQRVRERLLEHELVVEEMGGDVQNVEVSALKKTGLDKLLDAIALQAEIMELKANPDRAAEGTVIEAKLDKGRGPVATILVRRGTLKVGDIFVCGAESGRVRALVDDHGKQVKQATPSMPVEVLGLGGVPMAGDTLIVVENEARAREVAAYRQEQALKKRTAQAPVSLEGMFSALADKANVIEYPVVIKGDVQGSVEAIVNALNKLSTDEIRVRVLHAGAGAITESDVTLAASTRAPIIGFNVRPNAKAREIANREKVRFLYYDVIYHLTADVAKEMAGELGPERIENVVGRAEVKDVFPAGKRDKAAGLLVLEGSIRKGLHARLTRDDVIVSATTIASLRRFKDDVAEVRAGLECGVVLADTNDIKPGDHLEVFEVELRERTL</sequence>